<organism>
    <name type="scientific">Euglena stellata</name>
    <dbReference type="NCBI Taxonomy" id="38278"/>
    <lineage>
        <taxon>Eukaryota</taxon>
        <taxon>Discoba</taxon>
        <taxon>Euglenozoa</taxon>
        <taxon>Euglenida</taxon>
        <taxon>Spirocuta</taxon>
        <taxon>Euglenophyceae</taxon>
        <taxon>Euglenales</taxon>
        <taxon>Euglenaceae</taxon>
        <taxon>Euglena</taxon>
    </lineage>
</organism>
<feature type="chain" id="PRO_0000062470" description="Ribulose bisphosphate carboxylase large chain">
    <location>
        <begin position="1" status="less than"/>
        <end position="436" status="greater than"/>
    </location>
</feature>
<feature type="active site" description="Proton acceptor" evidence="1">
    <location>
        <position position="156"/>
    </location>
</feature>
<feature type="active site" description="Proton acceptor" evidence="1">
    <location>
        <position position="275"/>
    </location>
</feature>
<feature type="binding site" description="in homodimeric partner" evidence="1">
    <location>
        <position position="104"/>
    </location>
    <ligand>
        <name>substrate</name>
    </ligand>
</feature>
<feature type="binding site" evidence="1">
    <location>
        <position position="154"/>
    </location>
    <ligand>
        <name>substrate</name>
    </ligand>
</feature>
<feature type="binding site" evidence="1">
    <location>
        <position position="158"/>
    </location>
    <ligand>
        <name>substrate</name>
    </ligand>
</feature>
<feature type="binding site" description="via carbamate group" evidence="1">
    <location>
        <position position="182"/>
    </location>
    <ligand>
        <name>Mg(2+)</name>
        <dbReference type="ChEBI" id="CHEBI:18420"/>
    </ligand>
</feature>
<feature type="binding site" evidence="1">
    <location>
        <position position="184"/>
    </location>
    <ligand>
        <name>Mg(2+)</name>
        <dbReference type="ChEBI" id="CHEBI:18420"/>
    </ligand>
</feature>
<feature type="binding site" evidence="1">
    <location>
        <position position="185"/>
    </location>
    <ligand>
        <name>Mg(2+)</name>
        <dbReference type="ChEBI" id="CHEBI:18420"/>
    </ligand>
</feature>
<feature type="binding site" evidence="1">
    <location>
        <position position="276"/>
    </location>
    <ligand>
        <name>substrate</name>
    </ligand>
</feature>
<feature type="binding site" evidence="1">
    <location>
        <position position="308"/>
    </location>
    <ligand>
        <name>substrate</name>
    </ligand>
</feature>
<feature type="binding site" evidence="1">
    <location>
        <position position="360"/>
    </location>
    <ligand>
        <name>substrate</name>
    </ligand>
</feature>
<feature type="site" description="Transition state stabilizer" evidence="1">
    <location>
        <position position="315"/>
    </location>
</feature>
<feature type="modified residue" description="N6-carboxylysine" evidence="1">
    <location>
        <position position="182"/>
    </location>
</feature>
<feature type="non-terminal residue">
    <location>
        <position position="1"/>
    </location>
</feature>
<feature type="non-terminal residue">
    <location>
        <position position="436"/>
    </location>
</feature>
<accession>P48074</accession>
<gene>
    <name evidence="1" type="primary">rbcL</name>
</gene>
<name>RBL_EUGST</name>
<keyword id="KW-0113">Calvin cycle</keyword>
<keyword id="KW-0120">Carbon dioxide fixation</keyword>
<keyword id="KW-0150">Chloroplast</keyword>
<keyword id="KW-0456">Lyase</keyword>
<keyword id="KW-0460">Magnesium</keyword>
<keyword id="KW-0479">Metal-binding</keyword>
<keyword id="KW-0503">Monooxygenase</keyword>
<keyword id="KW-0560">Oxidoreductase</keyword>
<keyword id="KW-0601">Photorespiration</keyword>
<keyword id="KW-0602">Photosynthesis</keyword>
<keyword id="KW-0934">Plastid</keyword>
<proteinExistence type="evidence at transcript level"/>
<comment type="function">
    <text evidence="1">RuBisCO catalyzes two reactions: the carboxylation of D-ribulose 1,5-bisphosphate, the primary event in carbon dioxide fixation, as well as the oxidative fragmentation of the pentose substrate in the photorespiration process. Both reactions occur simultaneously and in competition at the same active site.</text>
</comment>
<comment type="catalytic activity">
    <reaction evidence="1">
        <text>2 (2R)-3-phosphoglycerate + 2 H(+) = D-ribulose 1,5-bisphosphate + CO2 + H2O</text>
        <dbReference type="Rhea" id="RHEA:23124"/>
        <dbReference type="ChEBI" id="CHEBI:15377"/>
        <dbReference type="ChEBI" id="CHEBI:15378"/>
        <dbReference type="ChEBI" id="CHEBI:16526"/>
        <dbReference type="ChEBI" id="CHEBI:57870"/>
        <dbReference type="ChEBI" id="CHEBI:58272"/>
        <dbReference type="EC" id="4.1.1.39"/>
    </reaction>
</comment>
<comment type="catalytic activity">
    <reaction evidence="1">
        <text>D-ribulose 1,5-bisphosphate + O2 = 2-phosphoglycolate + (2R)-3-phosphoglycerate + 2 H(+)</text>
        <dbReference type="Rhea" id="RHEA:36631"/>
        <dbReference type="ChEBI" id="CHEBI:15378"/>
        <dbReference type="ChEBI" id="CHEBI:15379"/>
        <dbReference type="ChEBI" id="CHEBI:57870"/>
        <dbReference type="ChEBI" id="CHEBI:58033"/>
        <dbReference type="ChEBI" id="CHEBI:58272"/>
    </reaction>
</comment>
<comment type="cofactor">
    <cofactor evidence="1">
        <name>Mg(2+)</name>
        <dbReference type="ChEBI" id="CHEBI:18420"/>
    </cofactor>
    <text evidence="1">Binds 1 Mg(2+) ion per subunit.</text>
</comment>
<comment type="subunit">
    <text evidence="1">Heterohexadecamer of 8 large chains and 8 small chains.</text>
</comment>
<comment type="subcellular location">
    <subcellularLocation>
        <location>Plastid</location>
        <location>Chloroplast</location>
    </subcellularLocation>
</comment>
<comment type="miscellaneous">
    <text evidence="1">The basic functional RuBisCO is composed of a large chain homodimer in a 'head-to-tail' conformation. In form I RuBisCO this homodimer is arranged in a barrel-like tetramer with the small subunits forming a tetrameric 'cap' on each end of the 'barrel'.</text>
</comment>
<comment type="similarity">
    <text evidence="1">Belongs to the RuBisCO large chain family. Type I subfamily.</text>
</comment>
<protein>
    <recommendedName>
        <fullName evidence="1">Ribulose bisphosphate carboxylase large chain</fullName>
        <shortName evidence="1">RuBisCO large subunit</shortName>
        <ecNumber evidence="1">4.1.1.39</ecNumber>
    </recommendedName>
</protein>
<sequence length="436" mass="48328">YRLTYYTPDYQVAETDILAAFRMTPQPGVPAEECGAAVAAESSTGTWTTVWTDGLTQLDRYKGRCYDLEPVPGESNRYIAYIAYPIDLFEEGSVTNLLTSIVGNVFGFKALRALRLEDLRIPPDYAKTFWGPPHGIQAERDRLNKYGRPLLGCTVKPKLGLSAKNYGRAVYECLRGGLDFTKDDENVNSQSVMRWRDRSXFCAEAIYKAQAETGEVKGHYLNATAGTVEEMFKRAVFSAQLGVPIIMHDYITGGFTANTSLSMYCRDNGLLLHIHRAMHAVIDRQRNHGIHFRVLAKTLRMSGGDHLHSGTVVGKLEGEREVTLGFVDLMRDPYVEKDRSRGIYFTQDWCGMGGTMPVASGGIHVWHMPALTEIFGDDACLQFGGGTLGHPWGNRPGAAANRVASEACVQARNEGRDLSREGGDVIREACKWSPEL</sequence>
<reference key="1">
    <citation type="journal article" date="1995" name="Nucleic Acids Res.">
        <title>Evidence for the late origin of introns in chloroplast genes from an evolutionary analysis of the genus Euglena.</title>
        <authorList>
            <person name="Thompson M.D."/>
            <person name="Copertino D.W."/>
            <person name="Thompson E."/>
            <person name="Favreau M.R."/>
            <person name="Hallick R.B."/>
        </authorList>
    </citation>
    <scope>NUCLEOTIDE SEQUENCE [MRNA]</scope>
    <source>
        <strain>UTEX 372</strain>
    </source>
</reference>
<geneLocation type="chloroplast"/>
<evidence type="ECO:0000255" key="1">
    <source>
        <dbReference type="HAMAP-Rule" id="MF_01338"/>
    </source>
</evidence>
<dbReference type="EC" id="4.1.1.39" evidence="1"/>
<dbReference type="EMBL" id="U21009">
    <property type="protein sequence ID" value="AAA91982.1"/>
    <property type="molecule type" value="mRNA"/>
</dbReference>
<dbReference type="PIR" id="S66171">
    <property type="entry name" value="S66171"/>
</dbReference>
<dbReference type="GO" id="GO:0009507">
    <property type="term" value="C:chloroplast"/>
    <property type="evidence" value="ECO:0007669"/>
    <property type="project" value="UniProtKB-SubCell"/>
</dbReference>
<dbReference type="GO" id="GO:0000287">
    <property type="term" value="F:magnesium ion binding"/>
    <property type="evidence" value="ECO:0007669"/>
    <property type="project" value="InterPro"/>
</dbReference>
<dbReference type="GO" id="GO:0004497">
    <property type="term" value="F:monooxygenase activity"/>
    <property type="evidence" value="ECO:0007669"/>
    <property type="project" value="UniProtKB-KW"/>
</dbReference>
<dbReference type="GO" id="GO:0016984">
    <property type="term" value="F:ribulose-bisphosphate carboxylase activity"/>
    <property type="evidence" value="ECO:0007669"/>
    <property type="project" value="UniProtKB-EC"/>
</dbReference>
<dbReference type="GO" id="GO:0009853">
    <property type="term" value="P:photorespiration"/>
    <property type="evidence" value="ECO:0007669"/>
    <property type="project" value="UniProtKB-KW"/>
</dbReference>
<dbReference type="GO" id="GO:0019253">
    <property type="term" value="P:reductive pentose-phosphate cycle"/>
    <property type="evidence" value="ECO:0007669"/>
    <property type="project" value="UniProtKB-KW"/>
</dbReference>
<dbReference type="CDD" id="cd08212">
    <property type="entry name" value="RuBisCO_large_I"/>
    <property type="match status" value="1"/>
</dbReference>
<dbReference type="Gene3D" id="3.20.20.110">
    <property type="entry name" value="Ribulose bisphosphate carboxylase, large subunit, C-terminal domain"/>
    <property type="match status" value="1"/>
</dbReference>
<dbReference type="Gene3D" id="3.30.70.150">
    <property type="entry name" value="RuBisCO large subunit, N-terminal domain"/>
    <property type="match status" value="1"/>
</dbReference>
<dbReference type="HAMAP" id="MF_01338">
    <property type="entry name" value="RuBisCO_L_type1"/>
    <property type="match status" value="1"/>
</dbReference>
<dbReference type="InterPro" id="IPR033966">
    <property type="entry name" value="RuBisCO"/>
</dbReference>
<dbReference type="InterPro" id="IPR020878">
    <property type="entry name" value="RuBisCo_large_chain_AS"/>
</dbReference>
<dbReference type="InterPro" id="IPR000685">
    <property type="entry name" value="RuBisCO_lsu_C"/>
</dbReference>
<dbReference type="InterPro" id="IPR036376">
    <property type="entry name" value="RuBisCO_lsu_C_sf"/>
</dbReference>
<dbReference type="InterPro" id="IPR017443">
    <property type="entry name" value="RuBisCO_lsu_fd_N"/>
</dbReference>
<dbReference type="InterPro" id="IPR036422">
    <property type="entry name" value="RuBisCO_lsu_N_sf"/>
</dbReference>
<dbReference type="InterPro" id="IPR020888">
    <property type="entry name" value="RuBisCO_lsuI"/>
</dbReference>
<dbReference type="NCBIfam" id="NF003252">
    <property type="entry name" value="PRK04208.1"/>
    <property type="match status" value="1"/>
</dbReference>
<dbReference type="PANTHER" id="PTHR42704">
    <property type="entry name" value="RIBULOSE BISPHOSPHATE CARBOXYLASE"/>
    <property type="match status" value="1"/>
</dbReference>
<dbReference type="PANTHER" id="PTHR42704:SF17">
    <property type="entry name" value="RIBULOSE BISPHOSPHATE CARBOXYLASE LARGE CHAIN"/>
    <property type="match status" value="1"/>
</dbReference>
<dbReference type="Pfam" id="PF00016">
    <property type="entry name" value="RuBisCO_large"/>
    <property type="match status" value="1"/>
</dbReference>
<dbReference type="Pfam" id="PF02788">
    <property type="entry name" value="RuBisCO_large_N"/>
    <property type="match status" value="1"/>
</dbReference>
<dbReference type="SFLD" id="SFLDG01052">
    <property type="entry name" value="RuBisCO"/>
    <property type="match status" value="1"/>
</dbReference>
<dbReference type="SFLD" id="SFLDS00014">
    <property type="entry name" value="RuBisCO"/>
    <property type="match status" value="1"/>
</dbReference>
<dbReference type="SFLD" id="SFLDG00301">
    <property type="entry name" value="RuBisCO-like_proteins"/>
    <property type="match status" value="1"/>
</dbReference>
<dbReference type="SUPFAM" id="SSF51649">
    <property type="entry name" value="RuBisCo, C-terminal domain"/>
    <property type="match status" value="1"/>
</dbReference>
<dbReference type="SUPFAM" id="SSF54966">
    <property type="entry name" value="RuBisCO, large subunit, small (N-terminal) domain"/>
    <property type="match status" value="1"/>
</dbReference>
<dbReference type="PROSITE" id="PS00157">
    <property type="entry name" value="RUBISCO_LARGE"/>
    <property type="match status" value="1"/>
</dbReference>